<evidence type="ECO:0000255" key="1">
    <source>
        <dbReference type="HAMAP-Rule" id="MF_00104"/>
    </source>
</evidence>
<sequence>MNQWEELQESVGFDFKNVELLKQAFTHSSYVNEHRRENVKDNERLEFLGDAVLELTVSDYLFNKYPDMAEGHMTKMRAAIVCEPSLVEFAEAVHFSKYVRLGKGEEKAGGRTRPALLADVFESFIGALYLDNGIDKVVTFLERVIFPKIDAGAYLQTVDYKTQLQEIVQRDRDVLIEYDILGETGPAHNKAFDAQVIVNGQVLGKGSGRTKKQAEQSAAQFAINKLIHR</sequence>
<gene>
    <name evidence="1" type="primary">rnc</name>
    <name type="synonym">rncS</name>
    <name type="ordered locus">lmo1805</name>
</gene>
<keyword id="KW-0963">Cytoplasm</keyword>
<keyword id="KW-0255">Endonuclease</keyword>
<keyword id="KW-0378">Hydrolase</keyword>
<keyword id="KW-0460">Magnesium</keyword>
<keyword id="KW-0479">Metal-binding</keyword>
<keyword id="KW-0507">mRNA processing</keyword>
<keyword id="KW-0540">Nuclease</keyword>
<keyword id="KW-1185">Reference proteome</keyword>
<keyword id="KW-0694">RNA-binding</keyword>
<keyword id="KW-0698">rRNA processing</keyword>
<keyword id="KW-0699">rRNA-binding</keyword>
<keyword id="KW-0819">tRNA processing</keyword>
<comment type="function">
    <text evidence="1">Digests double-stranded RNA. Involved in the processing of primary rRNA transcript to yield the immediate precursors to the large and small rRNAs (23S and 16S). Processes some mRNAs, and tRNAs when they are encoded in the rRNA operon. Processes pre-crRNA and tracrRNA of type II CRISPR loci if present in the organism.</text>
</comment>
<comment type="catalytic activity">
    <reaction evidence="1">
        <text>Endonucleolytic cleavage to 5'-phosphomonoester.</text>
        <dbReference type="EC" id="3.1.26.3"/>
    </reaction>
</comment>
<comment type="cofactor">
    <cofactor evidence="1">
        <name>Mg(2+)</name>
        <dbReference type="ChEBI" id="CHEBI:18420"/>
    </cofactor>
</comment>
<comment type="subunit">
    <text evidence="1">Homodimer.</text>
</comment>
<comment type="subcellular location">
    <subcellularLocation>
        <location evidence="1">Cytoplasm</location>
    </subcellularLocation>
</comment>
<comment type="similarity">
    <text evidence="1">Belongs to the ribonuclease III family.</text>
</comment>
<accession>Q8Y691</accession>
<organism>
    <name type="scientific">Listeria monocytogenes serovar 1/2a (strain ATCC BAA-679 / EGD-e)</name>
    <dbReference type="NCBI Taxonomy" id="169963"/>
    <lineage>
        <taxon>Bacteria</taxon>
        <taxon>Bacillati</taxon>
        <taxon>Bacillota</taxon>
        <taxon>Bacilli</taxon>
        <taxon>Bacillales</taxon>
        <taxon>Listeriaceae</taxon>
        <taxon>Listeria</taxon>
    </lineage>
</organism>
<feature type="chain" id="PRO_0000180409" description="Ribonuclease 3">
    <location>
        <begin position="1"/>
        <end position="229"/>
    </location>
</feature>
<feature type="domain" description="RNase III" evidence="1">
    <location>
        <begin position="4"/>
        <end position="133"/>
    </location>
</feature>
<feature type="domain" description="DRBM" evidence="1">
    <location>
        <begin position="159"/>
        <end position="228"/>
    </location>
</feature>
<feature type="active site" evidence="1">
    <location>
        <position position="50"/>
    </location>
</feature>
<feature type="active site" evidence="1">
    <location>
        <position position="122"/>
    </location>
</feature>
<feature type="binding site" evidence="1">
    <location>
        <position position="46"/>
    </location>
    <ligand>
        <name>Mg(2+)</name>
        <dbReference type="ChEBI" id="CHEBI:18420"/>
    </ligand>
</feature>
<feature type="binding site" evidence="1">
    <location>
        <position position="119"/>
    </location>
    <ligand>
        <name>Mg(2+)</name>
        <dbReference type="ChEBI" id="CHEBI:18420"/>
    </ligand>
</feature>
<feature type="binding site" evidence="1">
    <location>
        <position position="122"/>
    </location>
    <ligand>
        <name>Mg(2+)</name>
        <dbReference type="ChEBI" id="CHEBI:18420"/>
    </ligand>
</feature>
<dbReference type="EC" id="3.1.26.3" evidence="1"/>
<dbReference type="EMBL" id="AL591981">
    <property type="protein sequence ID" value="CAC99883.1"/>
    <property type="molecule type" value="Genomic_DNA"/>
</dbReference>
<dbReference type="PIR" id="AE1300">
    <property type="entry name" value="AE1300"/>
</dbReference>
<dbReference type="RefSeq" id="NP_465330.1">
    <property type="nucleotide sequence ID" value="NC_003210.1"/>
</dbReference>
<dbReference type="RefSeq" id="WP_010989817.1">
    <property type="nucleotide sequence ID" value="NZ_CP149495.1"/>
</dbReference>
<dbReference type="SMR" id="Q8Y691"/>
<dbReference type="STRING" id="169963.gene:17594490"/>
<dbReference type="PaxDb" id="169963-lmo1805"/>
<dbReference type="EnsemblBacteria" id="CAC99883">
    <property type="protein sequence ID" value="CAC99883"/>
    <property type="gene ID" value="CAC99883"/>
</dbReference>
<dbReference type="GeneID" id="985924"/>
<dbReference type="KEGG" id="lmo:lmo1805"/>
<dbReference type="PATRIC" id="fig|169963.11.peg.1849"/>
<dbReference type="eggNOG" id="COG0571">
    <property type="taxonomic scope" value="Bacteria"/>
</dbReference>
<dbReference type="HOGENOM" id="CLU_000907_1_3_9"/>
<dbReference type="OrthoDB" id="9805026at2"/>
<dbReference type="PhylomeDB" id="Q8Y691"/>
<dbReference type="BioCyc" id="LMON169963:LMO1805-MONOMER"/>
<dbReference type="Proteomes" id="UP000000817">
    <property type="component" value="Chromosome"/>
</dbReference>
<dbReference type="GO" id="GO:0005829">
    <property type="term" value="C:cytosol"/>
    <property type="evidence" value="ECO:0000318"/>
    <property type="project" value="GO_Central"/>
</dbReference>
<dbReference type="GO" id="GO:0003725">
    <property type="term" value="F:double-stranded RNA binding"/>
    <property type="evidence" value="ECO:0000318"/>
    <property type="project" value="GO_Central"/>
</dbReference>
<dbReference type="GO" id="GO:0046872">
    <property type="term" value="F:metal ion binding"/>
    <property type="evidence" value="ECO:0007669"/>
    <property type="project" value="UniProtKB-KW"/>
</dbReference>
<dbReference type="GO" id="GO:0004525">
    <property type="term" value="F:ribonuclease III activity"/>
    <property type="evidence" value="ECO:0000318"/>
    <property type="project" value="GO_Central"/>
</dbReference>
<dbReference type="GO" id="GO:0019843">
    <property type="term" value="F:rRNA binding"/>
    <property type="evidence" value="ECO:0007669"/>
    <property type="project" value="UniProtKB-KW"/>
</dbReference>
<dbReference type="GO" id="GO:0006397">
    <property type="term" value="P:mRNA processing"/>
    <property type="evidence" value="ECO:0007669"/>
    <property type="project" value="UniProtKB-UniRule"/>
</dbReference>
<dbReference type="GO" id="GO:0010468">
    <property type="term" value="P:regulation of gene expression"/>
    <property type="evidence" value="ECO:0000318"/>
    <property type="project" value="GO_Central"/>
</dbReference>
<dbReference type="GO" id="GO:0006396">
    <property type="term" value="P:RNA processing"/>
    <property type="evidence" value="ECO:0000318"/>
    <property type="project" value="GO_Central"/>
</dbReference>
<dbReference type="GO" id="GO:0006364">
    <property type="term" value="P:rRNA processing"/>
    <property type="evidence" value="ECO:0007669"/>
    <property type="project" value="UniProtKB-UniRule"/>
</dbReference>
<dbReference type="GO" id="GO:0008033">
    <property type="term" value="P:tRNA processing"/>
    <property type="evidence" value="ECO:0007669"/>
    <property type="project" value="UniProtKB-KW"/>
</dbReference>
<dbReference type="CDD" id="cd10845">
    <property type="entry name" value="DSRM_RNAse_III_family"/>
    <property type="match status" value="1"/>
</dbReference>
<dbReference type="CDD" id="cd00593">
    <property type="entry name" value="RIBOc"/>
    <property type="match status" value="1"/>
</dbReference>
<dbReference type="FunFam" id="1.10.1520.10:FF:000001">
    <property type="entry name" value="Ribonuclease 3"/>
    <property type="match status" value="1"/>
</dbReference>
<dbReference type="FunFam" id="3.30.160.20:FF:000003">
    <property type="entry name" value="Ribonuclease 3"/>
    <property type="match status" value="1"/>
</dbReference>
<dbReference type="Gene3D" id="3.30.160.20">
    <property type="match status" value="1"/>
</dbReference>
<dbReference type="Gene3D" id="1.10.1520.10">
    <property type="entry name" value="Ribonuclease III domain"/>
    <property type="match status" value="1"/>
</dbReference>
<dbReference type="HAMAP" id="MF_00104">
    <property type="entry name" value="RNase_III"/>
    <property type="match status" value="1"/>
</dbReference>
<dbReference type="InterPro" id="IPR014720">
    <property type="entry name" value="dsRBD_dom"/>
</dbReference>
<dbReference type="InterPro" id="IPR011907">
    <property type="entry name" value="RNase_III"/>
</dbReference>
<dbReference type="InterPro" id="IPR000999">
    <property type="entry name" value="RNase_III_dom"/>
</dbReference>
<dbReference type="InterPro" id="IPR036389">
    <property type="entry name" value="RNase_III_sf"/>
</dbReference>
<dbReference type="NCBIfam" id="TIGR02191">
    <property type="entry name" value="RNaseIII"/>
    <property type="match status" value="1"/>
</dbReference>
<dbReference type="PANTHER" id="PTHR11207:SF0">
    <property type="entry name" value="RIBONUCLEASE 3"/>
    <property type="match status" value="1"/>
</dbReference>
<dbReference type="PANTHER" id="PTHR11207">
    <property type="entry name" value="RIBONUCLEASE III"/>
    <property type="match status" value="1"/>
</dbReference>
<dbReference type="Pfam" id="PF00035">
    <property type="entry name" value="dsrm"/>
    <property type="match status" value="1"/>
</dbReference>
<dbReference type="Pfam" id="PF14622">
    <property type="entry name" value="Ribonucleas_3_3"/>
    <property type="match status" value="1"/>
</dbReference>
<dbReference type="SMART" id="SM00358">
    <property type="entry name" value="DSRM"/>
    <property type="match status" value="1"/>
</dbReference>
<dbReference type="SMART" id="SM00535">
    <property type="entry name" value="RIBOc"/>
    <property type="match status" value="1"/>
</dbReference>
<dbReference type="SUPFAM" id="SSF54768">
    <property type="entry name" value="dsRNA-binding domain-like"/>
    <property type="match status" value="1"/>
</dbReference>
<dbReference type="SUPFAM" id="SSF69065">
    <property type="entry name" value="RNase III domain-like"/>
    <property type="match status" value="1"/>
</dbReference>
<dbReference type="PROSITE" id="PS50137">
    <property type="entry name" value="DS_RBD"/>
    <property type="match status" value="1"/>
</dbReference>
<dbReference type="PROSITE" id="PS00517">
    <property type="entry name" value="RNASE_3_1"/>
    <property type="match status" value="1"/>
</dbReference>
<dbReference type="PROSITE" id="PS50142">
    <property type="entry name" value="RNASE_3_2"/>
    <property type="match status" value="1"/>
</dbReference>
<reference key="1">
    <citation type="journal article" date="2001" name="Science">
        <title>Comparative genomics of Listeria species.</title>
        <authorList>
            <person name="Glaser P."/>
            <person name="Frangeul L."/>
            <person name="Buchrieser C."/>
            <person name="Rusniok C."/>
            <person name="Amend A."/>
            <person name="Baquero F."/>
            <person name="Berche P."/>
            <person name="Bloecker H."/>
            <person name="Brandt P."/>
            <person name="Chakraborty T."/>
            <person name="Charbit A."/>
            <person name="Chetouani F."/>
            <person name="Couve E."/>
            <person name="de Daruvar A."/>
            <person name="Dehoux P."/>
            <person name="Domann E."/>
            <person name="Dominguez-Bernal G."/>
            <person name="Duchaud E."/>
            <person name="Durant L."/>
            <person name="Dussurget O."/>
            <person name="Entian K.-D."/>
            <person name="Fsihi H."/>
            <person name="Garcia-del Portillo F."/>
            <person name="Garrido P."/>
            <person name="Gautier L."/>
            <person name="Goebel W."/>
            <person name="Gomez-Lopez N."/>
            <person name="Hain T."/>
            <person name="Hauf J."/>
            <person name="Jackson D."/>
            <person name="Jones L.-M."/>
            <person name="Kaerst U."/>
            <person name="Kreft J."/>
            <person name="Kuhn M."/>
            <person name="Kunst F."/>
            <person name="Kurapkat G."/>
            <person name="Madueno E."/>
            <person name="Maitournam A."/>
            <person name="Mata Vicente J."/>
            <person name="Ng E."/>
            <person name="Nedjari H."/>
            <person name="Nordsiek G."/>
            <person name="Novella S."/>
            <person name="de Pablos B."/>
            <person name="Perez-Diaz J.-C."/>
            <person name="Purcell R."/>
            <person name="Remmel B."/>
            <person name="Rose M."/>
            <person name="Schlueter T."/>
            <person name="Simoes N."/>
            <person name="Tierrez A."/>
            <person name="Vazquez-Boland J.-A."/>
            <person name="Voss H."/>
            <person name="Wehland J."/>
            <person name="Cossart P."/>
        </authorList>
    </citation>
    <scope>NUCLEOTIDE SEQUENCE [LARGE SCALE GENOMIC DNA]</scope>
    <source>
        <strain>ATCC BAA-679 / EGD-e</strain>
    </source>
</reference>
<proteinExistence type="inferred from homology"/>
<name>RNC_LISMO</name>
<protein>
    <recommendedName>
        <fullName evidence="1">Ribonuclease 3</fullName>
        <ecNumber evidence="1">3.1.26.3</ecNumber>
    </recommendedName>
    <alternativeName>
        <fullName evidence="1">Ribonuclease III</fullName>
        <shortName evidence="1">RNase III</shortName>
    </alternativeName>
</protein>